<gene>
    <name evidence="1" type="primary">hutH</name>
    <name type="ordered locus">Acid345_1410</name>
</gene>
<feature type="chain" id="PRO_0000336580" description="Histidine ammonia-lyase">
    <location>
        <begin position="1"/>
        <end position="516"/>
    </location>
</feature>
<feature type="modified residue" description="2,3-didehydroalanine (Ser)" evidence="1">
    <location>
        <position position="144"/>
    </location>
</feature>
<feature type="cross-link" description="5-imidazolinone (Ala-Gly)" evidence="1">
    <location>
        <begin position="143"/>
        <end position="145"/>
    </location>
</feature>
<proteinExistence type="inferred from homology"/>
<sequence>MKALHLTGNTLTLDEVREVVYEQRPVLLDSDARAAVDRARAVIEDVVANDRLAYAVTTGVGKLSDVRIPPAENRTLQLNLMRSHAVGVGDPLSEQVSRAMMLLRANSLCKGWSGVRGLVIDTLCEMLNRGVHPVIPSQGSVGASGDLAPLAHQGLVLIGEGEAFYQGKRVSGAEALRAAGIKPITLEAKETISLINGTQAMLAVGLLAVLDAEILAETADAVGALALDVLQGTDAAFDERIHKARPHSGQIQVAANLRRLLAGSQIHESHKDCARVQDAYSLRCMPQVHGAVRDTIHYCRSVFEVEMNSAVDNPLVFPEPKKVGERSDAPVHGDIISGGNFHGEPVAFALDFLAIALSALAGISERRIERLVNPALSEGLPAFLAPGAGLNSGFMMPQVTAAALVSENKVLSHPASVDSITTSGNKEDFVSMGMTAALKLQRIVQNTRNVMAIEALAAAQALDFKAPLKTTKLLQKVHAAVRAVSPQITEDRILTADFAAAEALIRSGKLAAAARN</sequence>
<name>HUTH_KORVE</name>
<protein>
    <recommendedName>
        <fullName evidence="1">Histidine ammonia-lyase</fullName>
        <shortName evidence="1">Histidase</shortName>
        <ecNumber evidence="1">4.3.1.3</ecNumber>
    </recommendedName>
</protein>
<reference key="1">
    <citation type="journal article" date="2009" name="Appl. Environ. Microbiol.">
        <title>Three genomes from the phylum Acidobacteria provide insight into the lifestyles of these microorganisms in soils.</title>
        <authorList>
            <person name="Ward N.L."/>
            <person name="Challacombe J.F."/>
            <person name="Janssen P.H."/>
            <person name="Henrissat B."/>
            <person name="Coutinho P.M."/>
            <person name="Wu M."/>
            <person name="Xie G."/>
            <person name="Haft D.H."/>
            <person name="Sait M."/>
            <person name="Badger J."/>
            <person name="Barabote R.D."/>
            <person name="Bradley B."/>
            <person name="Brettin T.S."/>
            <person name="Brinkac L.M."/>
            <person name="Bruce D."/>
            <person name="Creasy T."/>
            <person name="Daugherty S.C."/>
            <person name="Davidsen T.M."/>
            <person name="DeBoy R.T."/>
            <person name="Detter J.C."/>
            <person name="Dodson R.J."/>
            <person name="Durkin A.S."/>
            <person name="Ganapathy A."/>
            <person name="Gwinn-Giglio M."/>
            <person name="Han C.S."/>
            <person name="Khouri H."/>
            <person name="Kiss H."/>
            <person name="Kothari S.P."/>
            <person name="Madupu R."/>
            <person name="Nelson K.E."/>
            <person name="Nelson W.C."/>
            <person name="Paulsen I."/>
            <person name="Penn K."/>
            <person name="Ren Q."/>
            <person name="Rosovitz M.J."/>
            <person name="Selengut J.D."/>
            <person name="Shrivastava S."/>
            <person name="Sullivan S.A."/>
            <person name="Tapia R."/>
            <person name="Thompson L.S."/>
            <person name="Watkins K.L."/>
            <person name="Yang Q."/>
            <person name="Yu C."/>
            <person name="Zafar N."/>
            <person name="Zhou L."/>
            <person name="Kuske C.R."/>
        </authorList>
    </citation>
    <scope>NUCLEOTIDE SEQUENCE [LARGE SCALE GENOMIC DNA]</scope>
    <source>
        <strain>Ellin345</strain>
    </source>
</reference>
<accession>Q1IRT8</accession>
<keyword id="KW-0963">Cytoplasm</keyword>
<keyword id="KW-0369">Histidine metabolism</keyword>
<keyword id="KW-0456">Lyase</keyword>
<keyword id="KW-1185">Reference proteome</keyword>
<evidence type="ECO:0000255" key="1">
    <source>
        <dbReference type="HAMAP-Rule" id="MF_00229"/>
    </source>
</evidence>
<comment type="catalytic activity">
    <reaction evidence="1">
        <text>L-histidine = trans-urocanate + NH4(+)</text>
        <dbReference type="Rhea" id="RHEA:21232"/>
        <dbReference type="ChEBI" id="CHEBI:17771"/>
        <dbReference type="ChEBI" id="CHEBI:28938"/>
        <dbReference type="ChEBI" id="CHEBI:57595"/>
        <dbReference type="EC" id="4.3.1.3"/>
    </reaction>
</comment>
<comment type="pathway">
    <text evidence="1">Amino-acid degradation; L-histidine degradation into L-glutamate; N-formimidoyl-L-glutamate from L-histidine: step 1/3.</text>
</comment>
<comment type="subcellular location">
    <subcellularLocation>
        <location evidence="1">Cytoplasm</location>
    </subcellularLocation>
</comment>
<comment type="PTM">
    <text evidence="1">Contains an active site 4-methylidene-imidazol-5-one (MIO), which is formed autocatalytically by cyclization and dehydration of residues Ala-Ser-Gly.</text>
</comment>
<comment type="similarity">
    <text evidence="1">Belongs to the PAL/histidase family.</text>
</comment>
<dbReference type="EC" id="4.3.1.3" evidence="1"/>
<dbReference type="EMBL" id="CP000360">
    <property type="protein sequence ID" value="ABF40412.1"/>
    <property type="molecule type" value="Genomic_DNA"/>
</dbReference>
<dbReference type="RefSeq" id="WP_011522214.1">
    <property type="nucleotide sequence ID" value="NC_008009.1"/>
</dbReference>
<dbReference type="SMR" id="Q1IRT8"/>
<dbReference type="STRING" id="204669.Acid345_1410"/>
<dbReference type="EnsemblBacteria" id="ABF40412">
    <property type="protein sequence ID" value="ABF40412"/>
    <property type="gene ID" value="Acid345_1410"/>
</dbReference>
<dbReference type="KEGG" id="aba:Acid345_1410"/>
<dbReference type="eggNOG" id="COG2986">
    <property type="taxonomic scope" value="Bacteria"/>
</dbReference>
<dbReference type="HOGENOM" id="CLU_014801_4_0_0"/>
<dbReference type="OrthoDB" id="9806955at2"/>
<dbReference type="UniPathway" id="UPA00379">
    <property type="reaction ID" value="UER00549"/>
</dbReference>
<dbReference type="Proteomes" id="UP000002432">
    <property type="component" value="Chromosome"/>
</dbReference>
<dbReference type="GO" id="GO:0005737">
    <property type="term" value="C:cytoplasm"/>
    <property type="evidence" value="ECO:0007669"/>
    <property type="project" value="UniProtKB-SubCell"/>
</dbReference>
<dbReference type="GO" id="GO:0004397">
    <property type="term" value="F:histidine ammonia-lyase activity"/>
    <property type="evidence" value="ECO:0007669"/>
    <property type="project" value="UniProtKB-UniRule"/>
</dbReference>
<dbReference type="GO" id="GO:0019556">
    <property type="term" value="P:L-histidine catabolic process to glutamate and formamide"/>
    <property type="evidence" value="ECO:0007669"/>
    <property type="project" value="UniProtKB-UniPathway"/>
</dbReference>
<dbReference type="GO" id="GO:0019557">
    <property type="term" value="P:L-histidine catabolic process to glutamate and formate"/>
    <property type="evidence" value="ECO:0007669"/>
    <property type="project" value="UniProtKB-UniPathway"/>
</dbReference>
<dbReference type="CDD" id="cd00332">
    <property type="entry name" value="PAL-HAL"/>
    <property type="match status" value="1"/>
</dbReference>
<dbReference type="FunFam" id="1.10.275.10:FF:000005">
    <property type="entry name" value="Histidine ammonia-lyase"/>
    <property type="match status" value="1"/>
</dbReference>
<dbReference type="FunFam" id="1.20.200.10:FF:000003">
    <property type="entry name" value="Histidine ammonia-lyase"/>
    <property type="match status" value="1"/>
</dbReference>
<dbReference type="Gene3D" id="1.20.200.10">
    <property type="entry name" value="Fumarase/aspartase (Central domain)"/>
    <property type="match status" value="1"/>
</dbReference>
<dbReference type="Gene3D" id="1.10.275.10">
    <property type="entry name" value="Fumarase/aspartase (N-terminal domain)"/>
    <property type="match status" value="1"/>
</dbReference>
<dbReference type="HAMAP" id="MF_00229">
    <property type="entry name" value="His_ammonia_lyase"/>
    <property type="match status" value="1"/>
</dbReference>
<dbReference type="InterPro" id="IPR001106">
    <property type="entry name" value="Aromatic_Lyase"/>
</dbReference>
<dbReference type="InterPro" id="IPR024083">
    <property type="entry name" value="Fumarase/histidase_N"/>
</dbReference>
<dbReference type="InterPro" id="IPR005921">
    <property type="entry name" value="HutH"/>
</dbReference>
<dbReference type="InterPro" id="IPR008948">
    <property type="entry name" value="L-Aspartase-like"/>
</dbReference>
<dbReference type="InterPro" id="IPR022313">
    <property type="entry name" value="Phe/His_NH3-lyase_AS"/>
</dbReference>
<dbReference type="NCBIfam" id="TIGR01225">
    <property type="entry name" value="hutH"/>
    <property type="match status" value="1"/>
</dbReference>
<dbReference type="NCBIfam" id="NF006871">
    <property type="entry name" value="PRK09367.1"/>
    <property type="match status" value="1"/>
</dbReference>
<dbReference type="PANTHER" id="PTHR10362">
    <property type="entry name" value="HISTIDINE AMMONIA-LYASE"/>
    <property type="match status" value="1"/>
</dbReference>
<dbReference type="Pfam" id="PF00221">
    <property type="entry name" value="Lyase_aromatic"/>
    <property type="match status" value="1"/>
</dbReference>
<dbReference type="SUPFAM" id="SSF48557">
    <property type="entry name" value="L-aspartase-like"/>
    <property type="match status" value="1"/>
</dbReference>
<dbReference type="PROSITE" id="PS00488">
    <property type="entry name" value="PAL_HISTIDASE"/>
    <property type="match status" value="1"/>
</dbReference>
<organism>
    <name type="scientific">Koribacter versatilis (strain Ellin345)</name>
    <dbReference type="NCBI Taxonomy" id="204669"/>
    <lineage>
        <taxon>Bacteria</taxon>
        <taxon>Pseudomonadati</taxon>
        <taxon>Acidobacteriota</taxon>
        <taxon>Terriglobia</taxon>
        <taxon>Terriglobales</taxon>
        <taxon>Candidatus Korobacteraceae</taxon>
        <taxon>Candidatus Korobacter</taxon>
    </lineage>
</organism>